<comment type="function">
    <text evidence="1">This protein is involved in the repair of mismatches in DNA. It is required for dam-dependent methyl-directed DNA mismatch repair. May act as a 'molecular matchmaker', a protein that promotes the formation of a stable complex between two or more DNA-binding proteins in an ATP-dependent manner without itself being part of a final effector complex.</text>
</comment>
<comment type="similarity">
    <text evidence="1">Belongs to the DNA mismatch repair MutL/HexB family.</text>
</comment>
<gene>
    <name evidence="1" type="primary">mutL</name>
    <name type="ordered locus">MXAN_4026</name>
</gene>
<reference key="1">
    <citation type="journal article" date="2006" name="Proc. Natl. Acad. Sci. U.S.A.">
        <title>Evolution of sensory complexity recorded in a myxobacterial genome.</title>
        <authorList>
            <person name="Goldman B.S."/>
            <person name="Nierman W.C."/>
            <person name="Kaiser D."/>
            <person name="Slater S.C."/>
            <person name="Durkin A.S."/>
            <person name="Eisen J.A."/>
            <person name="Ronning C.M."/>
            <person name="Barbazuk W.B."/>
            <person name="Blanchard M."/>
            <person name="Field C."/>
            <person name="Halling C."/>
            <person name="Hinkle G."/>
            <person name="Iartchuk O."/>
            <person name="Kim H.S."/>
            <person name="Mackenzie C."/>
            <person name="Madupu R."/>
            <person name="Miller N."/>
            <person name="Shvartsbeyn A."/>
            <person name="Sullivan S.A."/>
            <person name="Vaudin M."/>
            <person name="Wiegand R."/>
            <person name="Kaplan H.B."/>
        </authorList>
    </citation>
    <scope>NUCLEOTIDE SEQUENCE [LARGE SCALE GENOMIC DNA]</scope>
    <source>
        <strain>DK1622</strain>
    </source>
</reference>
<dbReference type="EMBL" id="CP000113">
    <property type="protein sequence ID" value="ABF90814.1"/>
    <property type="molecule type" value="Genomic_DNA"/>
</dbReference>
<dbReference type="RefSeq" id="WP_011554035.1">
    <property type="nucleotide sequence ID" value="NC_008095.1"/>
</dbReference>
<dbReference type="SMR" id="Q1D568"/>
<dbReference type="STRING" id="246197.MXAN_4026"/>
<dbReference type="EnsemblBacteria" id="ABF90814">
    <property type="protein sequence ID" value="ABF90814"/>
    <property type="gene ID" value="MXAN_4026"/>
</dbReference>
<dbReference type="GeneID" id="41361357"/>
<dbReference type="KEGG" id="mxa:MXAN_4026"/>
<dbReference type="eggNOG" id="COG0323">
    <property type="taxonomic scope" value="Bacteria"/>
</dbReference>
<dbReference type="HOGENOM" id="CLU_004131_4_2_7"/>
<dbReference type="OrthoDB" id="9763467at2"/>
<dbReference type="Proteomes" id="UP000002402">
    <property type="component" value="Chromosome"/>
</dbReference>
<dbReference type="GO" id="GO:0032300">
    <property type="term" value="C:mismatch repair complex"/>
    <property type="evidence" value="ECO:0007669"/>
    <property type="project" value="InterPro"/>
</dbReference>
<dbReference type="GO" id="GO:0005524">
    <property type="term" value="F:ATP binding"/>
    <property type="evidence" value="ECO:0007669"/>
    <property type="project" value="InterPro"/>
</dbReference>
<dbReference type="GO" id="GO:0016887">
    <property type="term" value="F:ATP hydrolysis activity"/>
    <property type="evidence" value="ECO:0007669"/>
    <property type="project" value="InterPro"/>
</dbReference>
<dbReference type="GO" id="GO:0140664">
    <property type="term" value="F:ATP-dependent DNA damage sensor activity"/>
    <property type="evidence" value="ECO:0007669"/>
    <property type="project" value="InterPro"/>
</dbReference>
<dbReference type="GO" id="GO:0030983">
    <property type="term" value="F:mismatched DNA binding"/>
    <property type="evidence" value="ECO:0007669"/>
    <property type="project" value="InterPro"/>
</dbReference>
<dbReference type="GO" id="GO:0006298">
    <property type="term" value="P:mismatch repair"/>
    <property type="evidence" value="ECO:0007669"/>
    <property type="project" value="UniProtKB-UniRule"/>
</dbReference>
<dbReference type="CDD" id="cd16926">
    <property type="entry name" value="HATPase_MutL-MLH-PMS-like"/>
    <property type="match status" value="1"/>
</dbReference>
<dbReference type="CDD" id="cd00782">
    <property type="entry name" value="MutL_Trans"/>
    <property type="match status" value="1"/>
</dbReference>
<dbReference type="FunFam" id="3.30.565.10:FF:000003">
    <property type="entry name" value="DNA mismatch repair endonuclease MutL"/>
    <property type="match status" value="1"/>
</dbReference>
<dbReference type="Gene3D" id="3.30.230.10">
    <property type="match status" value="1"/>
</dbReference>
<dbReference type="Gene3D" id="3.30.565.10">
    <property type="entry name" value="Histidine kinase-like ATPase, C-terminal domain"/>
    <property type="match status" value="1"/>
</dbReference>
<dbReference type="Gene3D" id="3.30.1540.20">
    <property type="entry name" value="MutL, C-terminal domain, dimerisation subdomain"/>
    <property type="match status" value="1"/>
</dbReference>
<dbReference type="Gene3D" id="3.30.1370.100">
    <property type="entry name" value="MutL, C-terminal domain, regulatory subdomain"/>
    <property type="match status" value="1"/>
</dbReference>
<dbReference type="HAMAP" id="MF_00149">
    <property type="entry name" value="DNA_mis_repair"/>
    <property type="match status" value="1"/>
</dbReference>
<dbReference type="InterPro" id="IPR020667">
    <property type="entry name" value="DNA_mismatch_repair_MutL"/>
</dbReference>
<dbReference type="InterPro" id="IPR013507">
    <property type="entry name" value="DNA_mismatch_S5_2-like"/>
</dbReference>
<dbReference type="InterPro" id="IPR036890">
    <property type="entry name" value="HATPase_C_sf"/>
</dbReference>
<dbReference type="InterPro" id="IPR002099">
    <property type="entry name" value="MutL/Mlh/PMS"/>
</dbReference>
<dbReference type="InterPro" id="IPR038973">
    <property type="entry name" value="MutL/Mlh/Pms-like"/>
</dbReference>
<dbReference type="InterPro" id="IPR014790">
    <property type="entry name" value="MutL_C"/>
</dbReference>
<dbReference type="InterPro" id="IPR042120">
    <property type="entry name" value="MutL_C_dimsub"/>
</dbReference>
<dbReference type="InterPro" id="IPR042121">
    <property type="entry name" value="MutL_C_regsub"/>
</dbReference>
<dbReference type="InterPro" id="IPR037198">
    <property type="entry name" value="MutL_C_sf"/>
</dbReference>
<dbReference type="InterPro" id="IPR020568">
    <property type="entry name" value="Ribosomal_Su5_D2-typ_SF"/>
</dbReference>
<dbReference type="InterPro" id="IPR014721">
    <property type="entry name" value="Ribsml_uS5_D2-typ_fold_subgr"/>
</dbReference>
<dbReference type="NCBIfam" id="TIGR00585">
    <property type="entry name" value="mutl"/>
    <property type="match status" value="1"/>
</dbReference>
<dbReference type="PANTHER" id="PTHR10073">
    <property type="entry name" value="DNA MISMATCH REPAIR PROTEIN MLH, PMS, MUTL"/>
    <property type="match status" value="1"/>
</dbReference>
<dbReference type="PANTHER" id="PTHR10073:SF12">
    <property type="entry name" value="DNA MISMATCH REPAIR PROTEIN MLH1"/>
    <property type="match status" value="1"/>
</dbReference>
<dbReference type="Pfam" id="PF01119">
    <property type="entry name" value="DNA_mis_repair"/>
    <property type="match status" value="1"/>
</dbReference>
<dbReference type="Pfam" id="PF13589">
    <property type="entry name" value="HATPase_c_3"/>
    <property type="match status" value="1"/>
</dbReference>
<dbReference type="Pfam" id="PF08676">
    <property type="entry name" value="MutL_C"/>
    <property type="match status" value="1"/>
</dbReference>
<dbReference type="SMART" id="SM01340">
    <property type="entry name" value="DNA_mis_repair"/>
    <property type="match status" value="1"/>
</dbReference>
<dbReference type="SMART" id="SM00853">
    <property type="entry name" value="MutL_C"/>
    <property type="match status" value="1"/>
</dbReference>
<dbReference type="SUPFAM" id="SSF55874">
    <property type="entry name" value="ATPase domain of HSP90 chaperone/DNA topoisomerase II/histidine kinase"/>
    <property type="match status" value="1"/>
</dbReference>
<dbReference type="SUPFAM" id="SSF118116">
    <property type="entry name" value="DNA mismatch repair protein MutL"/>
    <property type="match status" value="1"/>
</dbReference>
<dbReference type="SUPFAM" id="SSF54211">
    <property type="entry name" value="Ribosomal protein S5 domain 2-like"/>
    <property type="match status" value="1"/>
</dbReference>
<accession>Q1D568</accession>
<evidence type="ECO:0000255" key="1">
    <source>
        <dbReference type="HAMAP-Rule" id="MF_00149"/>
    </source>
</evidence>
<sequence>MSRIARLSDVLINKIAAGEVVERPASVVKELVENAIDAGAGTVRVELDGGGVDRIIVSDDGHGMGRSDAVACLERHATSKLRELDDLFHIDSMGFRGEAIPAIASVSRFTLHSAAANSEVGTRVSVEGGGPPLVEDAPPRTGTVMTVEDLFFNVPARRKFLRRGDTELKHAEEAVVRLALAYPEVGFFASHEGGTLFSSAACPDDPRERIAAALGSTSHPHLFPVEERRLGVAVTGFAASPEFTFNNARGLYTFVNRRYIRDRGLIGTIQRAYQDFLAAGRQPVVVLHIDVDPRAVDVNVHPQKQEVRFADARGVQEALTAALSRMLRAAPWLGSGVEGAAPQAGQPMDAAHYAHAVERFLTRAQEAAWGGPLPTAMDAPGPGPGAPSLGPLGQGARPGALPFAAAVGQAPAFGQAQPQLNEAPPPGYFGALRPLGMLGGRFHVCEGPGGTLVVMDPHAALERARLTGYLRALESGKPPPAPTLFGTTLELPVAAAKALVEGREALSRLGFDVEPFGGTTVALKTVPPGLEGADARSLLEALARALPPKSATLDTVSLAEAVRVMACHAAKQAGAVPLSDAQFRALLGELDRADFHPTCSHGTVVVLEMPLLELERRAR</sequence>
<feature type="chain" id="PRO_1000076700" description="DNA mismatch repair protein MutL">
    <location>
        <begin position="1"/>
        <end position="619"/>
    </location>
</feature>
<keyword id="KW-0227">DNA damage</keyword>
<keyword id="KW-0234">DNA repair</keyword>
<keyword id="KW-1185">Reference proteome</keyword>
<organism>
    <name type="scientific">Myxococcus xanthus (strain DK1622)</name>
    <dbReference type="NCBI Taxonomy" id="246197"/>
    <lineage>
        <taxon>Bacteria</taxon>
        <taxon>Pseudomonadati</taxon>
        <taxon>Myxococcota</taxon>
        <taxon>Myxococcia</taxon>
        <taxon>Myxococcales</taxon>
        <taxon>Cystobacterineae</taxon>
        <taxon>Myxococcaceae</taxon>
        <taxon>Myxococcus</taxon>
    </lineage>
</organism>
<name>MUTL_MYXXD</name>
<proteinExistence type="inferred from homology"/>
<protein>
    <recommendedName>
        <fullName evidence="1">DNA mismatch repair protein MutL</fullName>
    </recommendedName>
</protein>